<organism>
    <name type="scientific">Escherichia coli O127:H6 (strain E2348/69 / EPEC)</name>
    <dbReference type="NCBI Taxonomy" id="574521"/>
    <lineage>
        <taxon>Bacteria</taxon>
        <taxon>Pseudomonadati</taxon>
        <taxon>Pseudomonadota</taxon>
        <taxon>Gammaproteobacteria</taxon>
        <taxon>Enterobacterales</taxon>
        <taxon>Enterobacteriaceae</taxon>
        <taxon>Escherichia</taxon>
    </lineage>
</organism>
<accession>B7UFM4</accession>
<comment type="catalytic activity">
    <reaction evidence="1">
        <text>(S)-malate + a quinone = a quinol + oxaloacetate</text>
        <dbReference type="Rhea" id="RHEA:46012"/>
        <dbReference type="ChEBI" id="CHEBI:15589"/>
        <dbReference type="ChEBI" id="CHEBI:16452"/>
        <dbReference type="ChEBI" id="CHEBI:24646"/>
        <dbReference type="ChEBI" id="CHEBI:132124"/>
        <dbReference type="EC" id="1.1.5.4"/>
    </reaction>
</comment>
<comment type="cofactor">
    <cofactor evidence="1">
        <name>FAD</name>
        <dbReference type="ChEBI" id="CHEBI:57692"/>
    </cofactor>
</comment>
<comment type="pathway">
    <text evidence="1">Carbohydrate metabolism; tricarboxylic acid cycle; oxaloacetate from (S)-malate (quinone route): step 1/1.</text>
</comment>
<comment type="similarity">
    <text evidence="1">Belongs to the MQO family.</text>
</comment>
<sequence>MKKVTAMLFSMAVGLNAVSMAAKVKASEEQETDVLLIGGGIMSATLGTYLRELEPEWSMTMVERLEGVAQESSNGWNNAGTGHSALMELNYTPQNVDGSISIEKAVAINEAFQISRQFWAHQVERGVLRTPRSFINTVPHMSFVWGEDNVNFLRARYAALQQSSLFRGMRYSEDHAQIKEWAPLVMEGRDPQQKVAATRTEIGTDVNYGEITRQLIASLQKKSNFSLQLSSEVRALKRNDDNSWTVTVADLKNGTAQNIRAKFVFIGAGGAALKLLQESGIPEAKDYAGFPVGGQFLVSENPDVVNHHLAKVYGKASVGAPPMSVPHIDTRVLDGKRVVLFGPFATFSTKFLKNGSLWDLMSSTTTSNVMPMMHVGLDNFDLVKYLVSQVMLSEEDRFEALKEYYPQAKKEDWRLWQAGQRVQIIKRDADKGGVLRLGTEVVSDQQGTIAALLGASPGASTAAPIMLNLLEKVFGDRVSSPQWQATLKAIVPSYGRKLNGDVAATERELQYTSEVLGLKYDKPQAVDSTPKPQLKPQLVQKEVADIAL</sequence>
<name>MQO_ECO27</name>
<feature type="chain" id="PRO_1000124768" description="Probable malate:quinone oxidoreductase">
    <location>
        <begin position="1"/>
        <end position="548"/>
    </location>
</feature>
<reference key="1">
    <citation type="journal article" date="2009" name="J. Bacteriol.">
        <title>Complete genome sequence and comparative genome analysis of enteropathogenic Escherichia coli O127:H6 strain E2348/69.</title>
        <authorList>
            <person name="Iguchi A."/>
            <person name="Thomson N.R."/>
            <person name="Ogura Y."/>
            <person name="Saunders D."/>
            <person name="Ooka T."/>
            <person name="Henderson I.R."/>
            <person name="Harris D."/>
            <person name="Asadulghani M."/>
            <person name="Kurokawa K."/>
            <person name="Dean P."/>
            <person name="Kenny B."/>
            <person name="Quail M.A."/>
            <person name="Thurston S."/>
            <person name="Dougan G."/>
            <person name="Hayashi T."/>
            <person name="Parkhill J."/>
            <person name="Frankel G."/>
        </authorList>
    </citation>
    <scope>NUCLEOTIDE SEQUENCE [LARGE SCALE GENOMIC DNA]</scope>
    <source>
        <strain>E2348/69 / EPEC</strain>
    </source>
</reference>
<proteinExistence type="inferred from homology"/>
<keyword id="KW-0274">FAD</keyword>
<keyword id="KW-0285">Flavoprotein</keyword>
<keyword id="KW-0560">Oxidoreductase</keyword>
<keyword id="KW-1185">Reference proteome</keyword>
<keyword id="KW-0816">Tricarboxylic acid cycle</keyword>
<evidence type="ECO:0000255" key="1">
    <source>
        <dbReference type="HAMAP-Rule" id="MF_00212"/>
    </source>
</evidence>
<protein>
    <recommendedName>
        <fullName evidence="1">Probable malate:quinone oxidoreductase</fullName>
        <ecNumber evidence="1">1.1.5.4</ecNumber>
    </recommendedName>
    <alternativeName>
        <fullName evidence="1">MQO</fullName>
    </alternativeName>
    <alternativeName>
        <fullName evidence="1">Malate dehydrogenase [quinone]</fullName>
    </alternativeName>
</protein>
<dbReference type="EC" id="1.1.5.4" evidence="1"/>
<dbReference type="EMBL" id="FM180568">
    <property type="protein sequence ID" value="CAS09903.1"/>
    <property type="molecule type" value="Genomic_DNA"/>
</dbReference>
<dbReference type="RefSeq" id="WP_000758091.1">
    <property type="nucleotide sequence ID" value="NC_011601.1"/>
</dbReference>
<dbReference type="SMR" id="B7UFM4"/>
<dbReference type="KEGG" id="ecg:E2348C_2355"/>
<dbReference type="HOGENOM" id="CLU_028151_0_0_6"/>
<dbReference type="UniPathway" id="UPA00223">
    <property type="reaction ID" value="UER01008"/>
</dbReference>
<dbReference type="Proteomes" id="UP000008205">
    <property type="component" value="Chromosome"/>
</dbReference>
<dbReference type="GO" id="GO:0047545">
    <property type="term" value="F:2-hydroxyglutarate dehydrogenase activity"/>
    <property type="evidence" value="ECO:0007669"/>
    <property type="project" value="TreeGrafter"/>
</dbReference>
<dbReference type="GO" id="GO:0008924">
    <property type="term" value="F:L-malate dehydrogenase (quinone) activity"/>
    <property type="evidence" value="ECO:0007669"/>
    <property type="project" value="UniProtKB-UniRule"/>
</dbReference>
<dbReference type="GO" id="GO:0006099">
    <property type="term" value="P:tricarboxylic acid cycle"/>
    <property type="evidence" value="ECO:0007669"/>
    <property type="project" value="UniProtKB-UniRule"/>
</dbReference>
<dbReference type="Gene3D" id="3.30.9.10">
    <property type="entry name" value="D-Amino Acid Oxidase, subunit A, domain 2"/>
    <property type="match status" value="1"/>
</dbReference>
<dbReference type="Gene3D" id="3.50.50.60">
    <property type="entry name" value="FAD/NAD(P)-binding domain"/>
    <property type="match status" value="1"/>
</dbReference>
<dbReference type="HAMAP" id="MF_00212">
    <property type="entry name" value="MQO"/>
    <property type="match status" value="1"/>
</dbReference>
<dbReference type="InterPro" id="IPR036188">
    <property type="entry name" value="FAD/NAD-bd_sf"/>
</dbReference>
<dbReference type="InterPro" id="IPR006231">
    <property type="entry name" value="MQO"/>
</dbReference>
<dbReference type="NCBIfam" id="TIGR01320">
    <property type="entry name" value="mal_quin_oxido"/>
    <property type="match status" value="1"/>
</dbReference>
<dbReference type="NCBIfam" id="NF003603">
    <property type="entry name" value="PRK05257.1-1"/>
    <property type="match status" value="1"/>
</dbReference>
<dbReference type="NCBIfam" id="NF003605">
    <property type="entry name" value="PRK05257.1-4"/>
    <property type="match status" value="1"/>
</dbReference>
<dbReference type="NCBIfam" id="NF003606">
    <property type="entry name" value="PRK05257.2-1"/>
    <property type="match status" value="1"/>
</dbReference>
<dbReference type="NCBIfam" id="NF003608">
    <property type="entry name" value="PRK05257.2-4"/>
    <property type="match status" value="1"/>
</dbReference>
<dbReference type="NCBIfam" id="NF003611">
    <property type="entry name" value="PRK05257.3-2"/>
    <property type="match status" value="1"/>
</dbReference>
<dbReference type="NCBIfam" id="NF009875">
    <property type="entry name" value="PRK13339.1"/>
    <property type="match status" value="1"/>
</dbReference>
<dbReference type="PANTHER" id="PTHR43104">
    <property type="entry name" value="L-2-HYDROXYGLUTARATE DEHYDROGENASE, MITOCHONDRIAL"/>
    <property type="match status" value="1"/>
</dbReference>
<dbReference type="PANTHER" id="PTHR43104:SF2">
    <property type="entry name" value="L-2-HYDROXYGLUTARATE DEHYDROGENASE, MITOCHONDRIAL"/>
    <property type="match status" value="1"/>
</dbReference>
<dbReference type="Pfam" id="PF06039">
    <property type="entry name" value="Mqo"/>
    <property type="match status" value="1"/>
</dbReference>
<dbReference type="SUPFAM" id="SSF51905">
    <property type="entry name" value="FAD/NAD(P)-binding domain"/>
    <property type="match status" value="1"/>
</dbReference>
<gene>
    <name evidence="1" type="primary">mqo</name>
    <name type="ordered locus">E2348C_2355</name>
</gene>